<gene>
    <name type="primary">HHT1</name>
    <name type="ORF">MGG_01159</name>
</gene>
<proteinExistence type="inferred from homology"/>
<feature type="initiator methionine" description="Removed" evidence="1">
    <location>
        <position position="1"/>
    </location>
</feature>
<feature type="chain" id="PRO_0000297748" description="Histone H3">
    <location>
        <begin position="2"/>
        <end position="136"/>
    </location>
</feature>
<feature type="region of interest" description="Disordered" evidence="2">
    <location>
        <begin position="1"/>
        <end position="43"/>
    </location>
</feature>
<feature type="modified residue" description="N6,N6,N6-trimethyllysine; alternate" evidence="1">
    <location>
        <position position="5"/>
    </location>
</feature>
<feature type="modified residue" description="N6,N6-dimethyllysine; alternate" evidence="1">
    <location>
        <position position="5"/>
    </location>
</feature>
<feature type="modified residue" description="N6-methyllysine; alternate" evidence="1">
    <location>
        <position position="5"/>
    </location>
</feature>
<feature type="modified residue" description="N6-acetyllysine; alternate" evidence="1">
    <location>
        <position position="10"/>
    </location>
</feature>
<feature type="modified residue" description="N6-methyllysine; alternate" evidence="1">
    <location>
        <position position="10"/>
    </location>
</feature>
<feature type="modified residue" description="Phosphoserine" evidence="1">
    <location>
        <position position="11"/>
    </location>
</feature>
<feature type="modified residue" description="N6,N6-dimethyllysine; alternate" evidence="1">
    <location>
        <position position="15"/>
    </location>
</feature>
<feature type="modified residue" description="N6-acetyllysine; alternate" evidence="1">
    <location>
        <position position="15"/>
    </location>
</feature>
<feature type="modified residue" description="N6-acetyllysine; alternate" evidence="1">
    <location>
        <position position="19"/>
    </location>
</feature>
<feature type="modified residue" description="N6-methyllysine; alternate" evidence="1">
    <location>
        <position position="19"/>
    </location>
</feature>
<feature type="modified residue" description="N6-acetyllysine; alternate" evidence="1">
    <location>
        <position position="24"/>
    </location>
</feature>
<feature type="modified residue" description="N6-methyllysine; alternate" evidence="1">
    <location>
        <position position="24"/>
    </location>
</feature>
<feature type="modified residue" description="N6,N6,N6-trimethyllysine; alternate" evidence="1">
    <location>
        <position position="28"/>
    </location>
</feature>
<feature type="modified residue" description="N6,N6-dimethyllysine; alternate" evidence="1">
    <location>
        <position position="28"/>
    </location>
</feature>
<feature type="modified residue" description="N6-acetyllysine; alternate" evidence="1">
    <location>
        <position position="28"/>
    </location>
</feature>
<feature type="modified residue" description="N6-methyllysine; alternate" evidence="1">
    <location>
        <position position="28"/>
    </location>
</feature>
<feature type="modified residue" description="N6,N6,N6-trimethyllysine; alternate" evidence="1">
    <location>
        <position position="37"/>
    </location>
</feature>
<feature type="modified residue" description="N6,N6-dimethyllysine; alternate" evidence="1">
    <location>
        <position position="37"/>
    </location>
</feature>
<feature type="modified residue" description="N6-acetyllysine; alternate" evidence="1">
    <location>
        <position position="37"/>
    </location>
</feature>
<feature type="modified residue" description="N6-methyllysine; alternate" evidence="1">
    <location>
        <position position="37"/>
    </location>
</feature>
<feature type="modified residue" description="N6-acetyllysine" evidence="1">
    <location>
        <position position="57"/>
    </location>
</feature>
<feature type="modified residue" description="N6-acetyllysine" evidence="1">
    <location>
        <position position="65"/>
    </location>
</feature>
<feature type="modified residue" description="N6,N6,N6-trimethyllysine; alternate" evidence="1">
    <location>
        <position position="80"/>
    </location>
</feature>
<feature type="modified residue" description="N6,N6-dimethyllysine; alternate" evidence="1">
    <location>
        <position position="80"/>
    </location>
</feature>
<feature type="modified residue" description="N6-methyllysine; alternate" evidence="1">
    <location>
        <position position="80"/>
    </location>
</feature>
<name>H3_PYRO7</name>
<comment type="function">
    <text>Core component of nucleosome. Nucleosomes wrap and compact DNA into chromatin, limiting DNA accessibility to the cellular machineries which require DNA as a template. Histones thereby play a central role in transcription regulation, DNA repair, DNA replication and chromosomal stability. DNA accessibility is regulated via a complex set of post-translational modifications of histones, also called histone code, and nucleosome remodeling.</text>
</comment>
<comment type="subunit">
    <text>The nucleosome is a histone octamer containing two molecules each of H2A, H2B, H3 and H4 assembled in one H3-H4 heterotetramer and two H2A-H2B heterodimers. The octamer wraps approximately 147 bp of DNA.</text>
</comment>
<comment type="subcellular location">
    <subcellularLocation>
        <location evidence="1">Nucleus</location>
    </subcellularLocation>
    <subcellularLocation>
        <location evidence="1">Chromosome</location>
    </subcellularLocation>
</comment>
<comment type="PTM">
    <text evidence="1">Phosphorylated to form H3S10ph. H3S10ph promotes subsequent H3K14ac formation and is required for transcriptional activation through TBP recruitment to the promoters (By similarity).</text>
</comment>
<comment type="PTM">
    <text evidence="1">Mono-, di- and trimethylated by the COMPASS complex to form H3K4me1/2/3. H3K4me activates gene expression by regulating transcription elongation and plays a role in telomere length maintenance. H3K4me enrichment correlates with transcription levels, and occurs in a 5' to 3' gradient with H3K4me3 enrichment at the 5'-end of genes, shifting to H3K4me2 and then H3K4me1. Methylated by SET2 to form H3K36me. H3K36me represses gene expression. Methylated by DOT1 to form H3K79me. H3K79me is required for association of SIR proteins with telomeric regions and for telomeric silencing. The COMPASS-mediated formation of H3K4me2/3 and the DOT1-mediated formation of H3K79me require H2BK123ub1 (By similarity).</text>
</comment>
<comment type="PTM">
    <text evidence="1">Acetylation of histone H3 leads to transcriptional activation. H3K14ac formation by GCN5 is promoted by H3S10ph. H3K14ac can also be formed by ESA1. H3K56ac formation occurs predominantly in newly synthesized H3 molecules during G1, S and G2/M of the cell cycle and may be involved in DNA repair (By similarity).</text>
</comment>
<comment type="similarity">
    <text evidence="3">Belongs to the histone H3 family.</text>
</comment>
<comment type="caution">
    <text evidence="3">To ensure consistency between histone entries, we follow the 'Brno' nomenclature for histone modifications, with positions referring to those used in the literature for the 'closest' model organism. Due to slight variations in histone sequences between organisms and to the presence of initiator methionine in UniProtKB/Swiss-Prot sequences, the actual positions of modified amino acids in the sequence generally differ. In this entry the following conventions are used: H3K4me1/2/3 = mono-, di- and trimethylated Lys-5; H3K9ac = acetylated Lys-10; H3K9me1 = monomethylated Lys-10; H3S10ph = phosphorylated Ser-11; H3K14ac = acetylated Lys-15; H3K14me2 = dimethylated Lys-15; H3K18ac = acetylated Lys-19; H3K18me1 = monomethylated Lys-19; H3K23ac = acetylated Lys-24; H3K23me1 = monomethylated Lys-24; H3K27ac = acetylated Lys-28; H3K27me1/2/3 = mono-, di- and trimethylated Lys-28; H3K36ac = acetylated Lys-37; H3K36me1/2/3 = mono-, di- and trimethylated Lys-37; H3K56ac = acetylated Lys-57; H3K64ac = acetylated Lys-65; H3K79me1/2/3 = mono-, di- and trimethylated Lys-80.</text>
</comment>
<organism>
    <name type="scientific">Pyricularia oryzae (strain 70-15 / ATCC MYA-4617 / FGSC 8958)</name>
    <name type="common">Rice blast fungus</name>
    <name type="synonym">Magnaporthe oryzae</name>
    <dbReference type="NCBI Taxonomy" id="242507"/>
    <lineage>
        <taxon>Eukaryota</taxon>
        <taxon>Fungi</taxon>
        <taxon>Dikarya</taxon>
        <taxon>Ascomycota</taxon>
        <taxon>Pezizomycotina</taxon>
        <taxon>Sordariomycetes</taxon>
        <taxon>Sordariomycetidae</taxon>
        <taxon>Magnaporthales</taxon>
        <taxon>Pyriculariaceae</taxon>
        <taxon>Pyricularia</taxon>
    </lineage>
</organism>
<evidence type="ECO:0000250" key="1"/>
<evidence type="ECO:0000256" key="2">
    <source>
        <dbReference type="SAM" id="MobiDB-lite"/>
    </source>
</evidence>
<evidence type="ECO:0000305" key="3"/>
<protein>
    <recommendedName>
        <fullName>Histone H3</fullName>
    </recommendedName>
</protein>
<reference key="1">
    <citation type="journal article" date="2005" name="Nature">
        <title>The genome sequence of the rice blast fungus Magnaporthe grisea.</title>
        <authorList>
            <person name="Dean R.A."/>
            <person name="Talbot N.J."/>
            <person name="Ebbole D.J."/>
            <person name="Farman M.L."/>
            <person name="Mitchell T.K."/>
            <person name="Orbach M.J."/>
            <person name="Thon M.R."/>
            <person name="Kulkarni R."/>
            <person name="Xu J.-R."/>
            <person name="Pan H."/>
            <person name="Read N.D."/>
            <person name="Lee Y.-H."/>
            <person name="Carbone I."/>
            <person name="Brown D."/>
            <person name="Oh Y.Y."/>
            <person name="Donofrio N."/>
            <person name="Jeong J.S."/>
            <person name="Soanes D.M."/>
            <person name="Djonovic S."/>
            <person name="Kolomiets E."/>
            <person name="Rehmeyer C."/>
            <person name="Li W."/>
            <person name="Harding M."/>
            <person name="Kim S."/>
            <person name="Lebrun M.-H."/>
            <person name="Bohnert H."/>
            <person name="Coughlan S."/>
            <person name="Butler J."/>
            <person name="Calvo S.E."/>
            <person name="Ma L.-J."/>
            <person name="Nicol R."/>
            <person name="Purcell S."/>
            <person name="Nusbaum C."/>
            <person name="Galagan J.E."/>
            <person name="Birren B.W."/>
        </authorList>
    </citation>
    <scope>NUCLEOTIDE SEQUENCE [LARGE SCALE GENOMIC DNA]</scope>
    <source>
        <strain>70-15 / ATCC MYA-4617 / FGSC 8958</strain>
    </source>
</reference>
<dbReference type="EMBL" id="CM001235">
    <property type="protein sequence ID" value="EHA48178.1"/>
    <property type="molecule type" value="Genomic_DNA"/>
</dbReference>
<dbReference type="RefSeq" id="XP_003717762.1">
    <property type="nucleotide sequence ID" value="XM_003717714.1"/>
</dbReference>
<dbReference type="SMR" id="A4RCX7"/>
<dbReference type="FunCoup" id="A4RCX7">
    <property type="interactions" value="824"/>
</dbReference>
<dbReference type="STRING" id="242507.A4RCX7"/>
<dbReference type="EnsemblFungi" id="MGG_01159T0">
    <property type="protein sequence ID" value="MGG_01159T0"/>
    <property type="gene ID" value="MGG_01159"/>
</dbReference>
<dbReference type="GeneID" id="2675178"/>
<dbReference type="KEGG" id="mgr:MGG_01159"/>
<dbReference type="VEuPathDB" id="FungiDB:MGG_01159"/>
<dbReference type="eggNOG" id="KOG1745">
    <property type="taxonomic scope" value="Eukaryota"/>
</dbReference>
<dbReference type="HOGENOM" id="CLU_078295_4_0_1"/>
<dbReference type="InParanoid" id="A4RCX7"/>
<dbReference type="OMA" id="HIFAEMA"/>
<dbReference type="OrthoDB" id="842664at2759"/>
<dbReference type="Proteomes" id="UP000009058">
    <property type="component" value="Chromosome 5"/>
</dbReference>
<dbReference type="GO" id="GO:0000786">
    <property type="term" value="C:nucleosome"/>
    <property type="evidence" value="ECO:0007669"/>
    <property type="project" value="UniProtKB-KW"/>
</dbReference>
<dbReference type="GO" id="GO:0005634">
    <property type="term" value="C:nucleus"/>
    <property type="evidence" value="ECO:0007669"/>
    <property type="project" value="UniProtKB-SubCell"/>
</dbReference>
<dbReference type="GO" id="GO:0003677">
    <property type="term" value="F:DNA binding"/>
    <property type="evidence" value="ECO:0007669"/>
    <property type="project" value="UniProtKB-KW"/>
</dbReference>
<dbReference type="GO" id="GO:0046982">
    <property type="term" value="F:protein heterodimerization activity"/>
    <property type="evidence" value="ECO:0007669"/>
    <property type="project" value="InterPro"/>
</dbReference>
<dbReference type="GO" id="GO:0030527">
    <property type="term" value="F:structural constituent of chromatin"/>
    <property type="evidence" value="ECO:0007669"/>
    <property type="project" value="InterPro"/>
</dbReference>
<dbReference type="CDD" id="cd22911">
    <property type="entry name" value="HFD_H3"/>
    <property type="match status" value="1"/>
</dbReference>
<dbReference type="FunFam" id="1.10.20.10:FF:000010">
    <property type="entry name" value="Histone H3"/>
    <property type="match status" value="1"/>
</dbReference>
<dbReference type="Gene3D" id="1.10.20.10">
    <property type="entry name" value="Histone, subunit A"/>
    <property type="match status" value="1"/>
</dbReference>
<dbReference type="InterPro" id="IPR009072">
    <property type="entry name" value="Histone-fold"/>
</dbReference>
<dbReference type="InterPro" id="IPR007125">
    <property type="entry name" value="Histone_H2A/H2B/H3"/>
</dbReference>
<dbReference type="InterPro" id="IPR000164">
    <property type="entry name" value="Histone_H3/CENP-A"/>
</dbReference>
<dbReference type="PANTHER" id="PTHR11426">
    <property type="entry name" value="HISTONE H3"/>
    <property type="match status" value="1"/>
</dbReference>
<dbReference type="Pfam" id="PF00125">
    <property type="entry name" value="Histone"/>
    <property type="match status" value="1"/>
</dbReference>
<dbReference type="PRINTS" id="PR00622">
    <property type="entry name" value="HISTONEH3"/>
</dbReference>
<dbReference type="SMART" id="SM00428">
    <property type="entry name" value="H3"/>
    <property type="match status" value="1"/>
</dbReference>
<dbReference type="SUPFAM" id="SSF47113">
    <property type="entry name" value="Histone-fold"/>
    <property type="match status" value="1"/>
</dbReference>
<dbReference type="PROSITE" id="PS00322">
    <property type="entry name" value="HISTONE_H3_1"/>
    <property type="match status" value="1"/>
</dbReference>
<dbReference type="PROSITE" id="PS00959">
    <property type="entry name" value="HISTONE_H3_2"/>
    <property type="match status" value="1"/>
</dbReference>
<accession>A4RCX7</accession>
<accession>G4NBX6</accession>
<keyword id="KW-0007">Acetylation</keyword>
<keyword id="KW-0158">Chromosome</keyword>
<keyword id="KW-0238">DNA-binding</keyword>
<keyword id="KW-0488">Methylation</keyword>
<keyword id="KW-0544">Nucleosome core</keyword>
<keyword id="KW-0539">Nucleus</keyword>
<keyword id="KW-0597">Phosphoprotein</keyword>
<keyword id="KW-1185">Reference proteome</keyword>
<sequence>MARTKQTARKSTGGKAPRKQLASKAARKSAPSTGGVKKPHRYKPGTVALREIRRYQKSTELLIRKLPFQRLVREIAQDFKSDLRFQSSAIGALQESVESYLVSLFEDTNLCAIHAKRVTIQSKDIQLARRLRGERN</sequence>